<accession>Q54CU8</accession>
<proteinExistence type="inferred from homology"/>
<evidence type="ECO:0000250" key="1">
    <source>
        <dbReference type="UniProtKB" id="Q9NX08"/>
    </source>
</evidence>
<evidence type="ECO:0000255" key="2">
    <source>
        <dbReference type="PROSITE-ProRule" id="PRU00602"/>
    </source>
</evidence>
<evidence type="ECO:0000305" key="3"/>
<organism>
    <name type="scientific">Dictyostelium discoideum</name>
    <name type="common">Social amoeba</name>
    <dbReference type="NCBI Taxonomy" id="44689"/>
    <lineage>
        <taxon>Eukaryota</taxon>
        <taxon>Amoebozoa</taxon>
        <taxon>Evosea</taxon>
        <taxon>Eumycetozoa</taxon>
        <taxon>Dictyostelia</taxon>
        <taxon>Dictyosteliales</taxon>
        <taxon>Dictyosteliaceae</taxon>
        <taxon>Dictyostelium</taxon>
    </lineage>
</organism>
<comment type="function">
    <text evidence="1">Scaffold protein in the commander complex that is essential for endosomal recycling of transmembrane cargos; the commander complex is composed of the CCC subcomplex and the retriever subcomplex.</text>
</comment>
<comment type="subunit">
    <text evidence="1">Component of the commander complex consisting of the CCC subcomplex and the retriever subcomplex (By similarity). Component of the CCC subcomplex (By similarity).</text>
</comment>
<comment type="similarity">
    <text evidence="3">Belongs to the COMM domain-containing protein 8 family.</text>
</comment>
<feature type="chain" id="PRO_0000327468" description="COMM domain-containing protein 8">
    <location>
        <begin position="1"/>
        <end position="205"/>
    </location>
</feature>
<feature type="domain" description="COMM" evidence="2">
    <location>
        <begin position="139"/>
        <end position="205"/>
    </location>
</feature>
<name>COMD8_DICDI</name>
<reference key="1">
    <citation type="journal article" date="2005" name="Nature">
        <title>The genome of the social amoeba Dictyostelium discoideum.</title>
        <authorList>
            <person name="Eichinger L."/>
            <person name="Pachebat J.A."/>
            <person name="Gloeckner G."/>
            <person name="Rajandream M.A."/>
            <person name="Sucgang R."/>
            <person name="Berriman M."/>
            <person name="Song J."/>
            <person name="Olsen R."/>
            <person name="Szafranski K."/>
            <person name="Xu Q."/>
            <person name="Tunggal B."/>
            <person name="Kummerfeld S."/>
            <person name="Madera M."/>
            <person name="Konfortov B.A."/>
            <person name="Rivero F."/>
            <person name="Bankier A.T."/>
            <person name="Lehmann R."/>
            <person name="Hamlin N."/>
            <person name="Davies R."/>
            <person name="Gaudet P."/>
            <person name="Fey P."/>
            <person name="Pilcher K."/>
            <person name="Chen G."/>
            <person name="Saunders D."/>
            <person name="Sodergren E.J."/>
            <person name="Davis P."/>
            <person name="Kerhornou A."/>
            <person name="Nie X."/>
            <person name="Hall N."/>
            <person name="Anjard C."/>
            <person name="Hemphill L."/>
            <person name="Bason N."/>
            <person name="Farbrother P."/>
            <person name="Desany B."/>
            <person name="Just E."/>
            <person name="Morio T."/>
            <person name="Rost R."/>
            <person name="Churcher C.M."/>
            <person name="Cooper J."/>
            <person name="Haydock S."/>
            <person name="van Driessche N."/>
            <person name="Cronin A."/>
            <person name="Goodhead I."/>
            <person name="Muzny D.M."/>
            <person name="Mourier T."/>
            <person name="Pain A."/>
            <person name="Lu M."/>
            <person name="Harper D."/>
            <person name="Lindsay R."/>
            <person name="Hauser H."/>
            <person name="James K.D."/>
            <person name="Quiles M."/>
            <person name="Madan Babu M."/>
            <person name="Saito T."/>
            <person name="Buchrieser C."/>
            <person name="Wardroper A."/>
            <person name="Felder M."/>
            <person name="Thangavelu M."/>
            <person name="Johnson D."/>
            <person name="Knights A."/>
            <person name="Loulseged H."/>
            <person name="Mungall K.L."/>
            <person name="Oliver K."/>
            <person name="Price C."/>
            <person name="Quail M.A."/>
            <person name="Urushihara H."/>
            <person name="Hernandez J."/>
            <person name="Rabbinowitsch E."/>
            <person name="Steffen D."/>
            <person name="Sanders M."/>
            <person name="Ma J."/>
            <person name="Kohara Y."/>
            <person name="Sharp S."/>
            <person name="Simmonds M.N."/>
            <person name="Spiegler S."/>
            <person name="Tivey A."/>
            <person name="Sugano S."/>
            <person name="White B."/>
            <person name="Walker D."/>
            <person name="Woodward J.R."/>
            <person name="Winckler T."/>
            <person name="Tanaka Y."/>
            <person name="Shaulsky G."/>
            <person name="Schleicher M."/>
            <person name="Weinstock G.M."/>
            <person name="Rosenthal A."/>
            <person name="Cox E.C."/>
            <person name="Chisholm R.L."/>
            <person name="Gibbs R.A."/>
            <person name="Loomis W.F."/>
            <person name="Platzer M."/>
            <person name="Kay R.R."/>
            <person name="Williams J.G."/>
            <person name="Dear P.H."/>
            <person name="Noegel A.A."/>
            <person name="Barrell B.G."/>
            <person name="Kuspa A."/>
        </authorList>
    </citation>
    <scope>NUCLEOTIDE SEQUENCE [LARGE SCALE GENOMIC DNA]</scope>
    <source>
        <strain>AX4</strain>
    </source>
</reference>
<gene>
    <name type="primary">commd8</name>
    <name type="ORF">DDB_G0292688</name>
</gene>
<sequence length="205" mass="23807">MSSEKSTSIEKLTKYYSLQVVSQERLYNFLPKINILGSDKVCCDFIHSLIDQICGKIISFDRFINDENQRIIYQLIRVYTLFINKVVGKDLKKEFICEDLKTSNVDNIYITAISDCIISRFQDIKKELTEKLSTISSSSLSDFDWKMNAILSSDRINIVQENVLLLNLTIETNINDKKEQVLIELSKKELDHILETFDQINEVSF</sequence>
<keyword id="KW-1185">Reference proteome</keyword>
<protein>
    <recommendedName>
        <fullName>COMM domain-containing protein 8</fullName>
    </recommendedName>
</protein>
<dbReference type="EMBL" id="AAFI02000194">
    <property type="protein sequence ID" value="EAL61147.1"/>
    <property type="molecule type" value="Genomic_DNA"/>
</dbReference>
<dbReference type="RefSeq" id="XP_629572.1">
    <property type="nucleotide sequence ID" value="XM_629570.1"/>
</dbReference>
<dbReference type="SMR" id="Q54CU8"/>
<dbReference type="FunCoup" id="Q54CU8">
    <property type="interactions" value="7"/>
</dbReference>
<dbReference type="STRING" id="44689.Q54CU8"/>
<dbReference type="PaxDb" id="44689-DDB0266460"/>
<dbReference type="EnsemblProtists" id="EAL61147">
    <property type="protein sequence ID" value="EAL61147"/>
    <property type="gene ID" value="DDB_G0292688"/>
</dbReference>
<dbReference type="GeneID" id="8628833"/>
<dbReference type="KEGG" id="ddi:DDB_G0292688"/>
<dbReference type="dictyBase" id="DDB_G0292688">
    <property type="gene designation" value="commd8"/>
</dbReference>
<dbReference type="VEuPathDB" id="AmoebaDB:DDB_G0292688"/>
<dbReference type="eggNOG" id="ENOG502R99Z">
    <property type="taxonomic scope" value="Eukaryota"/>
</dbReference>
<dbReference type="HOGENOM" id="CLU_1339666_0_0_1"/>
<dbReference type="InParanoid" id="Q54CU8"/>
<dbReference type="OMA" id="DFDWKMN"/>
<dbReference type="PhylomeDB" id="Q54CU8"/>
<dbReference type="Reactome" id="R-DDI-8951664">
    <property type="pathway name" value="Neddylation"/>
</dbReference>
<dbReference type="PRO" id="PR:Q54CU8"/>
<dbReference type="Proteomes" id="UP000002195">
    <property type="component" value="Chromosome 6"/>
</dbReference>
<dbReference type="GO" id="GO:0051059">
    <property type="term" value="F:NF-kappaB binding"/>
    <property type="evidence" value="ECO:0000318"/>
    <property type="project" value="GO_Central"/>
</dbReference>
<dbReference type="GO" id="GO:0007165">
    <property type="term" value="P:signal transduction"/>
    <property type="evidence" value="ECO:0000318"/>
    <property type="project" value="GO_Central"/>
</dbReference>
<dbReference type="InterPro" id="IPR017920">
    <property type="entry name" value="COMM"/>
</dbReference>
<dbReference type="InterPro" id="IPR047155">
    <property type="entry name" value="COMMD4/6/7/8"/>
</dbReference>
<dbReference type="InterPro" id="IPR055184">
    <property type="entry name" value="COMMD8_HN"/>
</dbReference>
<dbReference type="PANTHER" id="PTHR16231">
    <property type="entry name" value="COMM DOMAIN-CONTAINING PROTEIN 4-8 FAMILY MEMBER"/>
    <property type="match status" value="1"/>
</dbReference>
<dbReference type="PANTHER" id="PTHR16231:SF0">
    <property type="entry name" value="COMM DOMAIN-CONTAINING PROTEIN 8"/>
    <property type="match status" value="1"/>
</dbReference>
<dbReference type="Pfam" id="PF07258">
    <property type="entry name" value="COMM_domain"/>
    <property type="match status" value="1"/>
</dbReference>
<dbReference type="Pfam" id="PF22838">
    <property type="entry name" value="COMMD8_HN"/>
    <property type="match status" value="1"/>
</dbReference>
<dbReference type="PROSITE" id="PS51269">
    <property type="entry name" value="COMM"/>
    <property type="match status" value="1"/>
</dbReference>